<gene>
    <name evidence="1" type="primary">glyA</name>
    <name type="ordered locus">RMA_1172</name>
</gene>
<protein>
    <recommendedName>
        <fullName evidence="1">Serine hydroxymethyltransferase</fullName>
        <shortName evidence="1">SHMT</shortName>
        <shortName evidence="1">Serine methylase</shortName>
        <ecNumber evidence="1">2.1.2.1</ecNumber>
    </recommendedName>
</protein>
<comment type="function">
    <text evidence="1">Catalyzes the reversible interconversion of serine and glycine with tetrahydrofolate (THF) serving as the one-carbon carrier. This reaction serves as the major source of one-carbon groups required for the biosynthesis of purines, thymidylate, methionine, and other important biomolecules. Also exhibits THF-independent aldolase activity toward beta-hydroxyamino acids, producing glycine and aldehydes, via a retro-aldol mechanism.</text>
</comment>
<comment type="catalytic activity">
    <reaction evidence="1">
        <text>(6R)-5,10-methylene-5,6,7,8-tetrahydrofolate + glycine + H2O = (6S)-5,6,7,8-tetrahydrofolate + L-serine</text>
        <dbReference type="Rhea" id="RHEA:15481"/>
        <dbReference type="ChEBI" id="CHEBI:15377"/>
        <dbReference type="ChEBI" id="CHEBI:15636"/>
        <dbReference type="ChEBI" id="CHEBI:33384"/>
        <dbReference type="ChEBI" id="CHEBI:57305"/>
        <dbReference type="ChEBI" id="CHEBI:57453"/>
        <dbReference type="EC" id="2.1.2.1"/>
    </reaction>
</comment>
<comment type="cofactor">
    <cofactor evidence="1">
        <name>pyridoxal 5'-phosphate</name>
        <dbReference type="ChEBI" id="CHEBI:597326"/>
    </cofactor>
</comment>
<comment type="pathway">
    <text evidence="1">One-carbon metabolism; tetrahydrofolate interconversion.</text>
</comment>
<comment type="pathway">
    <text evidence="1">Amino-acid biosynthesis; glycine biosynthesis; glycine from L-serine: step 1/1.</text>
</comment>
<comment type="subunit">
    <text evidence="1">Homodimer.</text>
</comment>
<comment type="subcellular location">
    <subcellularLocation>
        <location evidence="1">Cytoplasm</location>
    </subcellularLocation>
</comment>
<comment type="similarity">
    <text evidence="1">Belongs to the SHMT family.</text>
</comment>
<name>GLYA_RICM5</name>
<accession>A8F2M5</accession>
<dbReference type="EC" id="2.1.2.1" evidence="1"/>
<dbReference type="EMBL" id="CP000683">
    <property type="protein sequence ID" value="ABV85161.1"/>
    <property type="molecule type" value="Genomic_DNA"/>
</dbReference>
<dbReference type="RefSeq" id="WP_012153125.1">
    <property type="nucleotide sequence ID" value="NC_009900.1"/>
</dbReference>
<dbReference type="SMR" id="A8F2M5"/>
<dbReference type="KEGG" id="rms:RMA_1172"/>
<dbReference type="HOGENOM" id="CLU_022477_2_1_5"/>
<dbReference type="UniPathway" id="UPA00193"/>
<dbReference type="UniPathway" id="UPA00288">
    <property type="reaction ID" value="UER01023"/>
</dbReference>
<dbReference type="Proteomes" id="UP000001311">
    <property type="component" value="Chromosome"/>
</dbReference>
<dbReference type="GO" id="GO:0005829">
    <property type="term" value="C:cytosol"/>
    <property type="evidence" value="ECO:0007669"/>
    <property type="project" value="TreeGrafter"/>
</dbReference>
<dbReference type="GO" id="GO:0004372">
    <property type="term" value="F:glycine hydroxymethyltransferase activity"/>
    <property type="evidence" value="ECO:0007669"/>
    <property type="project" value="UniProtKB-UniRule"/>
</dbReference>
<dbReference type="GO" id="GO:0030170">
    <property type="term" value="F:pyridoxal phosphate binding"/>
    <property type="evidence" value="ECO:0007669"/>
    <property type="project" value="UniProtKB-UniRule"/>
</dbReference>
<dbReference type="GO" id="GO:0019264">
    <property type="term" value="P:glycine biosynthetic process from serine"/>
    <property type="evidence" value="ECO:0007669"/>
    <property type="project" value="UniProtKB-UniRule"/>
</dbReference>
<dbReference type="GO" id="GO:0035999">
    <property type="term" value="P:tetrahydrofolate interconversion"/>
    <property type="evidence" value="ECO:0007669"/>
    <property type="project" value="UniProtKB-UniRule"/>
</dbReference>
<dbReference type="CDD" id="cd00378">
    <property type="entry name" value="SHMT"/>
    <property type="match status" value="1"/>
</dbReference>
<dbReference type="FunFam" id="3.40.640.10:FF:000001">
    <property type="entry name" value="Serine hydroxymethyltransferase"/>
    <property type="match status" value="1"/>
</dbReference>
<dbReference type="Gene3D" id="3.90.1150.10">
    <property type="entry name" value="Aspartate Aminotransferase, domain 1"/>
    <property type="match status" value="1"/>
</dbReference>
<dbReference type="Gene3D" id="3.40.640.10">
    <property type="entry name" value="Type I PLP-dependent aspartate aminotransferase-like (Major domain)"/>
    <property type="match status" value="1"/>
</dbReference>
<dbReference type="HAMAP" id="MF_00051">
    <property type="entry name" value="SHMT"/>
    <property type="match status" value="1"/>
</dbReference>
<dbReference type="InterPro" id="IPR015424">
    <property type="entry name" value="PyrdxlP-dep_Trfase"/>
</dbReference>
<dbReference type="InterPro" id="IPR015421">
    <property type="entry name" value="PyrdxlP-dep_Trfase_major"/>
</dbReference>
<dbReference type="InterPro" id="IPR015422">
    <property type="entry name" value="PyrdxlP-dep_Trfase_small"/>
</dbReference>
<dbReference type="InterPro" id="IPR001085">
    <property type="entry name" value="Ser_HO-MeTrfase"/>
</dbReference>
<dbReference type="InterPro" id="IPR049943">
    <property type="entry name" value="Ser_HO-MeTrfase-like"/>
</dbReference>
<dbReference type="InterPro" id="IPR019798">
    <property type="entry name" value="Ser_HO-MeTrfase_PLP_BS"/>
</dbReference>
<dbReference type="InterPro" id="IPR039429">
    <property type="entry name" value="SHMT-like_dom"/>
</dbReference>
<dbReference type="NCBIfam" id="NF000586">
    <property type="entry name" value="PRK00011.1"/>
    <property type="match status" value="1"/>
</dbReference>
<dbReference type="PANTHER" id="PTHR11680">
    <property type="entry name" value="SERINE HYDROXYMETHYLTRANSFERASE"/>
    <property type="match status" value="1"/>
</dbReference>
<dbReference type="PANTHER" id="PTHR11680:SF35">
    <property type="entry name" value="SERINE HYDROXYMETHYLTRANSFERASE 1"/>
    <property type="match status" value="1"/>
</dbReference>
<dbReference type="Pfam" id="PF00464">
    <property type="entry name" value="SHMT"/>
    <property type="match status" value="1"/>
</dbReference>
<dbReference type="PIRSF" id="PIRSF000412">
    <property type="entry name" value="SHMT"/>
    <property type="match status" value="1"/>
</dbReference>
<dbReference type="SUPFAM" id="SSF53383">
    <property type="entry name" value="PLP-dependent transferases"/>
    <property type="match status" value="1"/>
</dbReference>
<dbReference type="PROSITE" id="PS00096">
    <property type="entry name" value="SHMT"/>
    <property type="match status" value="1"/>
</dbReference>
<feature type="chain" id="PRO_1000057370" description="Serine hydroxymethyltransferase">
    <location>
        <begin position="1"/>
        <end position="420"/>
    </location>
</feature>
<feature type="binding site" evidence="1">
    <location>
        <position position="121"/>
    </location>
    <ligand>
        <name>(6S)-5,6,7,8-tetrahydrofolate</name>
        <dbReference type="ChEBI" id="CHEBI:57453"/>
    </ligand>
</feature>
<feature type="binding site" evidence="1">
    <location>
        <begin position="125"/>
        <end position="127"/>
    </location>
    <ligand>
        <name>(6S)-5,6,7,8-tetrahydrofolate</name>
        <dbReference type="ChEBI" id="CHEBI:57453"/>
    </ligand>
</feature>
<feature type="binding site" evidence="1">
    <location>
        <position position="246"/>
    </location>
    <ligand>
        <name>(6S)-5,6,7,8-tetrahydrofolate</name>
        <dbReference type="ChEBI" id="CHEBI:57453"/>
    </ligand>
</feature>
<feature type="binding site" evidence="1">
    <location>
        <begin position="354"/>
        <end position="356"/>
    </location>
    <ligand>
        <name>(6S)-5,6,7,8-tetrahydrofolate</name>
        <dbReference type="ChEBI" id="CHEBI:57453"/>
    </ligand>
</feature>
<feature type="site" description="Plays an important role in substrate specificity" evidence="1">
    <location>
        <position position="229"/>
    </location>
</feature>
<feature type="modified residue" description="N6-(pyridoxal phosphate)lysine" evidence="1">
    <location>
        <position position="230"/>
    </location>
</feature>
<evidence type="ECO:0000255" key="1">
    <source>
        <dbReference type="HAMAP-Rule" id="MF_00051"/>
    </source>
</evidence>
<organism>
    <name type="scientific">Rickettsia massiliae (strain Mtu5)</name>
    <dbReference type="NCBI Taxonomy" id="416276"/>
    <lineage>
        <taxon>Bacteria</taxon>
        <taxon>Pseudomonadati</taxon>
        <taxon>Pseudomonadota</taxon>
        <taxon>Alphaproteobacteria</taxon>
        <taxon>Rickettsiales</taxon>
        <taxon>Rickettsiaceae</taxon>
        <taxon>Rickettsieae</taxon>
        <taxon>Rickettsia</taxon>
        <taxon>spotted fever group</taxon>
    </lineage>
</organism>
<keyword id="KW-0028">Amino-acid biosynthesis</keyword>
<keyword id="KW-0963">Cytoplasm</keyword>
<keyword id="KW-0554">One-carbon metabolism</keyword>
<keyword id="KW-0663">Pyridoxal phosphate</keyword>
<keyword id="KW-0808">Transferase</keyword>
<proteinExistence type="inferred from homology"/>
<reference key="1">
    <citation type="journal article" date="2007" name="Genome Res.">
        <title>Lateral gene transfer between obligate intracellular bacteria: evidence from the Rickettsia massiliae genome.</title>
        <authorList>
            <person name="Blanc G."/>
            <person name="Ogata H."/>
            <person name="Robert C."/>
            <person name="Audic S."/>
            <person name="Claverie J.-M."/>
            <person name="Raoult D."/>
        </authorList>
    </citation>
    <scope>NUCLEOTIDE SEQUENCE [LARGE SCALE GENOMIC DNA]</scope>
    <source>
        <strain>Mtu5</strain>
    </source>
</reference>
<sequence>MNIFNKNLHETDKEINEIIKHEKLRQSSVIELIASENFVSPAVLEAQGSLLTNKYAEGYPSKRFYNGCEEVDKAENLAIERVKKLFNCKYANVQPHSGSQANQAVYLALLQPGDTVLGMSLDSGGHLTHGAAPNMSGKWFNVVSYSVNKETYLIDYDEIERLADLHKPKLLIAGFSAYPRNIDFAKFREIVDKVGAYFMADIAHIAGLVATGEHQSPIPYAHAVTSTTHKTLRGPRGGLILSNDEEIGQKINSALFPGLQGGPLMHIIAAKAVAFLENLQPEYKSYIQQVISNAKALASSLQERGYDILTGGTDNHIVLVDLRKDGITGKFAANSLDRAGITCNKNAIPFDETSPFITSGIRLGTPACTTRGFKEKDFVLVGYMVADILDGLKNNEDNSDLEQKVLNEVTKLIKLFPFYG</sequence>